<evidence type="ECO:0000255" key="1">
    <source>
        <dbReference type="HAMAP-Rule" id="MF_00196"/>
    </source>
</evidence>
<comment type="catalytic activity">
    <reaction evidence="1">
        <text>D-mannitol 1-phosphate + NAD(+) = beta-D-fructose 6-phosphate + NADH + H(+)</text>
        <dbReference type="Rhea" id="RHEA:19661"/>
        <dbReference type="ChEBI" id="CHEBI:15378"/>
        <dbReference type="ChEBI" id="CHEBI:57540"/>
        <dbReference type="ChEBI" id="CHEBI:57634"/>
        <dbReference type="ChEBI" id="CHEBI:57945"/>
        <dbReference type="ChEBI" id="CHEBI:61381"/>
        <dbReference type="EC" id="1.1.1.17"/>
    </reaction>
</comment>
<comment type="similarity">
    <text evidence="1">Belongs to the mannitol dehydrogenase family.</text>
</comment>
<accession>A7MWS7</accession>
<dbReference type="EC" id="1.1.1.17" evidence="1"/>
<dbReference type="EMBL" id="CP000789">
    <property type="protein sequence ID" value="ABU69834.1"/>
    <property type="molecule type" value="Genomic_DNA"/>
</dbReference>
<dbReference type="RefSeq" id="WP_012126939.1">
    <property type="nucleotide sequence ID" value="NC_009783.1"/>
</dbReference>
<dbReference type="SMR" id="A7MWS7"/>
<dbReference type="KEGG" id="vha:VIBHAR_00833"/>
<dbReference type="PATRIC" id="fig|338187.25.peg.1782"/>
<dbReference type="Proteomes" id="UP000008152">
    <property type="component" value="Chromosome I"/>
</dbReference>
<dbReference type="GO" id="GO:0005829">
    <property type="term" value="C:cytosol"/>
    <property type="evidence" value="ECO:0007669"/>
    <property type="project" value="TreeGrafter"/>
</dbReference>
<dbReference type="GO" id="GO:0008926">
    <property type="term" value="F:mannitol-1-phosphate 5-dehydrogenase activity"/>
    <property type="evidence" value="ECO:0007669"/>
    <property type="project" value="UniProtKB-UniRule"/>
</dbReference>
<dbReference type="GO" id="GO:0019592">
    <property type="term" value="P:mannitol catabolic process"/>
    <property type="evidence" value="ECO:0007669"/>
    <property type="project" value="TreeGrafter"/>
</dbReference>
<dbReference type="FunFam" id="1.10.1040.10:FF:000009">
    <property type="entry name" value="Mannitol-1-phosphate 5-dehydrogenase"/>
    <property type="match status" value="1"/>
</dbReference>
<dbReference type="FunFam" id="3.40.50.720:FF:000075">
    <property type="entry name" value="Mannitol-1-phosphate 5-dehydrogenase"/>
    <property type="match status" value="1"/>
</dbReference>
<dbReference type="Gene3D" id="1.10.1040.10">
    <property type="entry name" value="N-(1-d-carboxylethyl)-l-norvaline Dehydrogenase, domain 2"/>
    <property type="match status" value="1"/>
</dbReference>
<dbReference type="Gene3D" id="3.40.50.720">
    <property type="entry name" value="NAD(P)-binding Rossmann-like Domain"/>
    <property type="match status" value="1"/>
</dbReference>
<dbReference type="HAMAP" id="MF_00196">
    <property type="entry name" value="Mannitol_dehydrog"/>
    <property type="match status" value="1"/>
</dbReference>
<dbReference type="InterPro" id="IPR008927">
    <property type="entry name" value="6-PGluconate_DH-like_C_sf"/>
</dbReference>
<dbReference type="InterPro" id="IPR013328">
    <property type="entry name" value="6PGD_dom2"/>
</dbReference>
<dbReference type="InterPro" id="IPR023028">
    <property type="entry name" value="Mannitol_1_phos_5_DH"/>
</dbReference>
<dbReference type="InterPro" id="IPR000669">
    <property type="entry name" value="Mannitol_DH"/>
</dbReference>
<dbReference type="InterPro" id="IPR013118">
    <property type="entry name" value="Mannitol_DH_C"/>
</dbReference>
<dbReference type="InterPro" id="IPR023027">
    <property type="entry name" value="Mannitol_DH_CS"/>
</dbReference>
<dbReference type="InterPro" id="IPR013131">
    <property type="entry name" value="Mannitol_DH_N"/>
</dbReference>
<dbReference type="InterPro" id="IPR036291">
    <property type="entry name" value="NAD(P)-bd_dom_sf"/>
</dbReference>
<dbReference type="NCBIfam" id="NF002646">
    <property type="entry name" value="PRK02318.1-2"/>
    <property type="match status" value="1"/>
</dbReference>
<dbReference type="NCBIfam" id="NF002647">
    <property type="entry name" value="PRK02318.1-3"/>
    <property type="match status" value="1"/>
</dbReference>
<dbReference type="NCBIfam" id="NF002650">
    <property type="entry name" value="PRK02318.2-2"/>
    <property type="match status" value="1"/>
</dbReference>
<dbReference type="NCBIfam" id="NF002652">
    <property type="entry name" value="PRK02318.2-5"/>
    <property type="match status" value="1"/>
</dbReference>
<dbReference type="PANTHER" id="PTHR30524:SF0">
    <property type="entry name" value="ALTRONATE OXIDOREDUCTASE-RELATED"/>
    <property type="match status" value="1"/>
</dbReference>
<dbReference type="PANTHER" id="PTHR30524">
    <property type="entry name" value="MANNITOL-1-PHOSPHATE 5-DEHYDROGENASE"/>
    <property type="match status" value="1"/>
</dbReference>
<dbReference type="Pfam" id="PF01232">
    <property type="entry name" value="Mannitol_dh"/>
    <property type="match status" value="1"/>
</dbReference>
<dbReference type="Pfam" id="PF08125">
    <property type="entry name" value="Mannitol_dh_C"/>
    <property type="match status" value="1"/>
</dbReference>
<dbReference type="PRINTS" id="PR00084">
    <property type="entry name" value="MTLDHDRGNASE"/>
</dbReference>
<dbReference type="SUPFAM" id="SSF48179">
    <property type="entry name" value="6-phosphogluconate dehydrogenase C-terminal domain-like"/>
    <property type="match status" value="1"/>
</dbReference>
<dbReference type="SUPFAM" id="SSF51735">
    <property type="entry name" value="NAD(P)-binding Rossmann-fold domains"/>
    <property type="match status" value="1"/>
</dbReference>
<dbReference type="PROSITE" id="PS00974">
    <property type="entry name" value="MANNITOL_DHGENASE"/>
    <property type="match status" value="1"/>
</dbReference>
<reference key="1">
    <citation type="submission" date="2007-08" db="EMBL/GenBank/DDBJ databases">
        <authorList>
            <consortium name="The Vibrio harveyi Genome Sequencing Project"/>
            <person name="Bassler B."/>
            <person name="Clifton S.W."/>
            <person name="Fulton L."/>
            <person name="Delehaunty K."/>
            <person name="Fronick C."/>
            <person name="Harrison M."/>
            <person name="Markivic C."/>
            <person name="Fulton R."/>
            <person name="Tin-Wollam A.-M."/>
            <person name="Shah N."/>
            <person name="Pepin K."/>
            <person name="Nash W."/>
            <person name="Thiruvilangam P."/>
            <person name="Bhonagiri V."/>
            <person name="Waters C."/>
            <person name="Tu K.C."/>
            <person name="Irgon J."/>
            <person name="Wilson R.K."/>
        </authorList>
    </citation>
    <scope>NUCLEOTIDE SEQUENCE [LARGE SCALE GENOMIC DNA]</scope>
    <source>
        <strain>ATCC BAA-1116 / BB120</strain>
    </source>
</reference>
<keyword id="KW-0520">NAD</keyword>
<keyword id="KW-0560">Oxidoreductase</keyword>
<sequence length="382" mass="41931">MKNAVHFGAGNIGRGFIGKLLADAEVEVTFADVDAPLVDQLSHKQEYKVKVVGTECQIDTVTHVTAVNSASEDVIDRIVKTDLVTTAVGPNVLDIIAKTIATGIAKRFAAGNDKPLNIIACENMVRGTTHLKGEVYKHLDESLHSKADELVGFVDSAVDRIVPPAEAANDDPLEVTVESFSEWIVDEQQFKGEIPDIAGMEKTNNLMAFVERKLFTLNTGHCITAYLGCLKGHRTIREAIEDPSIHAEVKQAMQESGEVLIKRYGFDRDMHNAYIEKILGRFANPYLVDEVDRVGRQPIRKLGANDRLVKPLLGTIEYGTENKTLLKGIAAALKYTNDTDPQAVEQQNSLKEVGVKKTLATYTGLAENSAEVTQIETLYNQL</sequence>
<feature type="chain" id="PRO_1000011819" description="Mannitol-1-phosphate 5-dehydrogenase">
    <location>
        <begin position="1"/>
        <end position="382"/>
    </location>
</feature>
<feature type="binding site" evidence="1">
    <location>
        <begin position="4"/>
        <end position="15"/>
    </location>
    <ligand>
        <name>NAD(+)</name>
        <dbReference type="ChEBI" id="CHEBI:57540"/>
    </ligand>
</feature>
<protein>
    <recommendedName>
        <fullName evidence="1">Mannitol-1-phosphate 5-dehydrogenase</fullName>
        <ecNumber evidence="1">1.1.1.17</ecNumber>
    </recommendedName>
</protein>
<name>MTLD_VIBC1</name>
<gene>
    <name evidence="1" type="primary">mtlD</name>
    <name type="ordered locus">VIBHAR_00833</name>
</gene>
<proteinExistence type="inferred from homology"/>
<organism>
    <name type="scientific">Vibrio campbellii (strain ATCC BAA-1116)</name>
    <dbReference type="NCBI Taxonomy" id="2902295"/>
    <lineage>
        <taxon>Bacteria</taxon>
        <taxon>Pseudomonadati</taxon>
        <taxon>Pseudomonadota</taxon>
        <taxon>Gammaproteobacteria</taxon>
        <taxon>Vibrionales</taxon>
        <taxon>Vibrionaceae</taxon>
        <taxon>Vibrio</taxon>
    </lineage>
</organism>